<reference key="1">
    <citation type="journal article" date="2013" name="Toxins">
        <title>A proteomics and transcriptomics investigation of the venom from the barychelid spider Trittame loki (brush-foot trapdoor).</title>
        <authorList>
            <person name="Undheim E.A."/>
            <person name="Sunagar K."/>
            <person name="Herzig V."/>
            <person name="Kely L."/>
            <person name="Low D.H."/>
            <person name="Jackson T.N."/>
            <person name="Jones A."/>
            <person name="Kurniawan N."/>
            <person name="King G.F."/>
            <person name="Ali S.A."/>
            <person name="Antunes A."/>
            <person name="Ruder T."/>
            <person name="Fry B.G."/>
        </authorList>
    </citation>
    <scope>NUCLEOTIDE SEQUENCE [MRNA]</scope>
    <source>
        <tissue>Venom gland</tissue>
    </source>
</reference>
<proteinExistence type="inferred from homology"/>
<feature type="signal peptide" evidence="2">
    <location>
        <begin position="1"/>
        <end position="19"/>
    </location>
</feature>
<feature type="chain" id="PRO_0000429219" description="Toxin ICK-12">
    <location>
        <begin position="20"/>
        <end position="88"/>
    </location>
</feature>
<feature type="disulfide bond" evidence="1">
    <location>
        <begin position="41"/>
        <end position="78"/>
    </location>
</feature>
<feature type="disulfide bond" evidence="1">
    <location>
        <begin position="41"/>
        <end position="55"/>
    </location>
</feature>
<feature type="disulfide bond" evidence="1">
    <location>
        <begin position="54"/>
        <end position="67"/>
    </location>
</feature>
<feature type="disulfide bond" evidence="1">
    <location>
        <begin position="81"/>
        <end position="88"/>
    </location>
</feature>
<accession>W4VRX8</accession>
<protein>
    <recommendedName>
        <fullName evidence="3">Toxin ICK-12</fullName>
    </recommendedName>
</protein>
<organism>
    <name type="scientific">Trittame loki</name>
    <name type="common">Brush-footed trapdoor spider</name>
    <dbReference type="NCBI Taxonomy" id="1295018"/>
    <lineage>
        <taxon>Eukaryota</taxon>
        <taxon>Metazoa</taxon>
        <taxon>Ecdysozoa</taxon>
        <taxon>Arthropoda</taxon>
        <taxon>Chelicerata</taxon>
        <taxon>Arachnida</taxon>
        <taxon>Araneae</taxon>
        <taxon>Mygalomorphae</taxon>
        <taxon>Barychelidae</taxon>
        <taxon>Trittame</taxon>
    </lineage>
</organism>
<sequence length="88" mass="9855">MKSIVYMLLFCTFTVVILGHPNDHGALIPYRAEKLPNGEWCIRPGYSCSERGQCCMPVDGDTYTYGCGRAWSEGSKVCFICNRESSMC</sequence>
<keyword id="KW-1015">Disulfide bond</keyword>
<keyword id="KW-0872">Ion channel impairing toxin</keyword>
<keyword id="KW-0960">Knottin</keyword>
<keyword id="KW-0528">Neurotoxin</keyword>
<keyword id="KW-0964">Secreted</keyword>
<keyword id="KW-0732">Signal</keyword>
<keyword id="KW-0800">Toxin</keyword>
<dbReference type="EMBL" id="GAQE01000015">
    <property type="protein sequence ID" value="JAB84539.1"/>
    <property type="molecule type" value="Transcribed_RNA"/>
</dbReference>
<dbReference type="SMR" id="W4VRX8"/>
<dbReference type="ArachnoServer" id="AS002079">
    <property type="toxin name" value="U2-barytoxin-Tl1a"/>
</dbReference>
<dbReference type="GO" id="GO:0005576">
    <property type="term" value="C:extracellular region"/>
    <property type="evidence" value="ECO:0007669"/>
    <property type="project" value="UniProtKB-SubCell"/>
</dbReference>
<dbReference type="GO" id="GO:0099106">
    <property type="term" value="F:ion channel regulator activity"/>
    <property type="evidence" value="ECO:0007669"/>
    <property type="project" value="UniProtKB-KW"/>
</dbReference>
<dbReference type="GO" id="GO:0090729">
    <property type="term" value="F:toxin activity"/>
    <property type="evidence" value="ECO:0007669"/>
    <property type="project" value="UniProtKB-KW"/>
</dbReference>
<dbReference type="InterPro" id="IPR035311">
    <property type="entry name" value="Cys_Knot_tox"/>
</dbReference>
<dbReference type="Pfam" id="PF17486">
    <property type="entry name" value="Cys_Knot_tox"/>
    <property type="match status" value="1"/>
</dbReference>
<evidence type="ECO:0000250" key="1">
    <source>
        <dbReference type="UniProtKB" id="A0A1D0C027"/>
    </source>
</evidence>
<evidence type="ECO:0000255" key="2"/>
<evidence type="ECO:0000303" key="3">
    <source>
    </source>
</evidence>
<evidence type="ECO:0000305" key="4"/>
<evidence type="ECO:0000305" key="5">
    <source>
    </source>
</evidence>
<comment type="function">
    <text evidence="4">Probable neurotoxin with ion channel impairing activity.</text>
</comment>
<comment type="subcellular location">
    <subcellularLocation>
        <location evidence="5">Secreted</location>
    </subcellularLocation>
</comment>
<comment type="tissue specificity">
    <text evidence="5">Expressed by the venom gland.</text>
</comment>
<comment type="domain">
    <text evidence="1">The presence of a 'disulfide through disulfide knot' structurally defines this protein as a knottin.</text>
</comment>
<comment type="similarity">
    <text evidence="4">Belongs to the neurotoxin 27 (Jztx-72) family. ICK-41 subfamily.</text>
</comment>
<name>ICK12_TRILK</name>